<dbReference type="EC" id="2.1.1.228" evidence="1"/>
<dbReference type="EMBL" id="CP000753">
    <property type="protein sequence ID" value="ABS07407.1"/>
    <property type="molecule type" value="Genomic_DNA"/>
</dbReference>
<dbReference type="RefSeq" id="WP_006080790.1">
    <property type="nucleotide sequence ID" value="NC_009665.1"/>
</dbReference>
<dbReference type="SMR" id="A6WKR8"/>
<dbReference type="KEGG" id="sbm:Shew185_1256"/>
<dbReference type="HOGENOM" id="CLU_047363_0_1_6"/>
<dbReference type="GO" id="GO:0005829">
    <property type="term" value="C:cytosol"/>
    <property type="evidence" value="ECO:0007669"/>
    <property type="project" value="TreeGrafter"/>
</dbReference>
<dbReference type="GO" id="GO:0052906">
    <property type="term" value="F:tRNA (guanine(37)-N1)-methyltransferase activity"/>
    <property type="evidence" value="ECO:0007669"/>
    <property type="project" value="UniProtKB-UniRule"/>
</dbReference>
<dbReference type="GO" id="GO:0002939">
    <property type="term" value="P:tRNA N1-guanine methylation"/>
    <property type="evidence" value="ECO:0007669"/>
    <property type="project" value="TreeGrafter"/>
</dbReference>
<dbReference type="CDD" id="cd18080">
    <property type="entry name" value="TrmD-like"/>
    <property type="match status" value="1"/>
</dbReference>
<dbReference type="FunFam" id="1.10.1270.20:FF:000001">
    <property type="entry name" value="tRNA (guanine-N(1)-)-methyltransferase"/>
    <property type="match status" value="1"/>
</dbReference>
<dbReference type="FunFam" id="3.40.1280.10:FF:000001">
    <property type="entry name" value="tRNA (guanine-N(1)-)-methyltransferase"/>
    <property type="match status" value="1"/>
</dbReference>
<dbReference type="Gene3D" id="3.40.1280.10">
    <property type="match status" value="1"/>
</dbReference>
<dbReference type="Gene3D" id="1.10.1270.20">
    <property type="entry name" value="tRNA(m1g37)methyltransferase, domain 2"/>
    <property type="match status" value="1"/>
</dbReference>
<dbReference type="HAMAP" id="MF_00605">
    <property type="entry name" value="TrmD"/>
    <property type="match status" value="1"/>
</dbReference>
<dbReference type="InterPro" id="IPR029028">
    <property type="entry name" value="Alpha/beta_knot_MTases"/>
</dbReference>
<dbReference type="InterPro" id="IPR023148">
    <property type="entry name" value="tRNA_m1G_MeTrfase_C_sf"/>
</dbReference>
<dbReference type="InterPro" id="IPR002649">
    <property type="entry name" value="tRNA_m1G_MeTrfase_TrmD"/>
</dbReference>
<dbReference type="InterPro" id="IPR029026">
    <property type="entry name" value="tRNA_m1G_MTases_N"/>
</dbReference>
<dbReference type="InterPro" id="IPR016009">
    <property type="entry name" value="tRNA_MeTrfase_TRMD/TRM10"/>
</dbReference>
<dbReference type="NCBIfam" id="NF000648">
    <property type="entry name" value="PRK00026.1"/>
    <property type="match status" value="1"/>
</dbReference>
<dbReference type="NCBIfam" id="TIGR00088">
    <property type="entry name" value="trmD"/>
    <property type="match status" value="1"/>
</dbReference>
<dbReference type="PANTHER" id="PTHR46417">
    <property type="entry name" value="TRNA (GUANINE-N(1)-)-METHYLTRANSFERASE"/>
    <property type="match status" value="1"/>
</dbReference>
<dbReference type="PANTHER" id="PTHR46417:SF1">
    <property type="entry name" value="TRNA (GUANINE-N(1)-)-METHYLTRANSFERASE"/>
    <property type="match status" value="1"/>
</dbReference>
<dbReference type="Pfam" id="PF01746">
    <property type="entry name" value="tRNA_m1G_MT"/>
    <property type="match status" value="1"/>
</dbReference>
<dbReference type="PIRSF" id="PIRSF000386">
    <property type="entry name" value="tRNA_mtase"/>
    <property type="match status" value="1"/>
</dbReference>
<dbReference type="SUPFAM" id="SSF75217">
    <property type="entry name" value="alpha/beta knot"/>
    <property type="match status" value="1"/>
</dbReference>
<evidence type="ECO:0000255" key="1">
    <source>
        <dbReference type="HAMAP-Rule" id="MF_00605"/>
    </source>
</evidence>
<name>TRMD_SHEB8</name>
<gene>
    <name evidence="1" type="primary">trmD</name>
    <name type="ordered locus">Shew185_1256</name>
</gene>
<organism>
    <name type="scientific">Shewanella baltica (strain OS185)</name>
    <dbReference type="NCBI Taxonomy" id="402882"/>
    <lineage>
        <taxon>Bacteria</taxon>
        <taxon>Pseudomonadati</taxon>
        <taxon>Pseudomonadota</taxon>
        <taxon>Gammaproteobacteria</taxon>
        <taxon>Alteromonadales</taxon>
        <taxon>Shewanellaceae</taxon>
        <taxon>Shewanella</taxon>
    </lineage>
</organism>
<feature type="chain" id="PRO_1000006514" description="tRNA (guanine-N(1)-)-methyltransferase">
    <location>
        <begin position="1"/>
        <end position="248"/>
    </location>
</feature>
<feature type="binding site" evidence="1">
    <location>
        <position position="113"/>
    </location>
    <ligand>
        <name>S-adenosyl-L-methionine</name>
        <dbReference type="ChEBI" id="CHEBI:59789"/>
    </ligand>
</feature>
<feature type="binding site" evidence="1">
    <location>
        <begin position="133"/>
        <end position="138"/>
    </location>
    <ligand>
        <name>S-adenosyl-L-methionine</name>
        <dbReference type="ChEBI" id="CHEBI:59789"/>
    </ligand>
</feature>
<accession>A6WKR8</accession>
<comment type="function">
    <text evidence="1">Specifically methylates guanosine-37 in various tRNAs.</text>
</comment>
<comment type="catalytic activity">
    <reaction evidence="1">
        <text>guanosine(37) in tRNA + S-adenosyl-L-methionine = N(1)-methylguanosine(37) in tRNA + S-adenosyl-L-homocysteine + H(+)</text>
        <dbReference type="Rhea" id="RHEA:36899"/>
        <dbReference type="Rhea" id="RHEA-COMP:10145"/>
        <dbReference type="Rhea" id="RHEA-COMP:10147"/>
        <dbReference type="ChEBI" id="CHEBI:15378"/>
        <dbReference type="ChEBI" id="CHEBI:57856"/>
        <dbReference type="ChEBI" id="CHEBI:59789"/>
        <dbReference type="ChEBI" id="CHEBI:73542"/>
        <dbReference type="ChEBI" id="CHEBI:74269"/>
        <dbReference type="EC" id="2.1.1.228"/>
    </reaction>
</comment>
<comment type="subunit">
    <text evidence="1">Homodimer.</text>
</comment>
<comment type="subcellular location">
    <subcellularLocation>
        <location evidence="1">Cytoplasm</location>
    </subcellularLocation>
</comment>
<comment type="similarity">
    <text evidence="1">Belongs to the RNA methyltransferase TrmD family.</text>
</comment>
<protein>
    <recommendedName>
        <fullName evidence="1">tRNA (guanine-N(1)-)-methyltransferase</fullName>
        <ecNumber evidence="1">2.1.1.228</ecNumber>
    </recommendedName>
    <alternativeName>
        <fullName evidence="1">M1G-methyltransferase</fullName>
    </alternativeName>
    <alternativeName>
        <fullName evidence="1">tRNA [GM37] methyltransferase</fullName>
    </alternativeName>
</protein>
<keyword id="KW-0963">Cytoplasm</keyword>
<keyword id="KW-0489">Methyltransferase</keyword>
<keyword id="KW-0949">S-adenosyl-L-methionine</keyword>
<keyword id="KW-0808">Transferase</keyword>
<keyword id="KW-0819">tRNA processing</keyword>
<reference key="1">
    <citation type="submission" date="2007-07" db="EMBL/GenBank/DDBJ databases">
        <title>Complete sequence of chromosome of Shewanella baltica OS185.</title>
        <authorList>
            <consortium name="US DOE Joint Genome Institute"/>
            <person name="Copeland A."/>
            <person name="Lucas S."/>
            <person name="Lapidus A."/>
            <person name="Barry K."/>
            <person name="Glavina del Rio T."/>
            <person name="Dalin E."/>
            <person name="Tice H."/>
            <person name="Pitluck S."/>
            <person name="Sims D."/>
            <person name="Brettin T."/>
            <person name="Bruce D."/>
            <person name="Detter J.C."/>
            <person name="Han C."/>
            <person name="Schmutz J."/>
            <person name="Larimer F."/>
            <person name="Land M."/>
            <person name="Hauser L."/>
            <person name="Kyrpides N."/>
            <person name="Mikhailova N."/>
            <person name="Brettar I."/>
            <person name="Rodrigues J."/>
            <person name="Konstantinidis K."/>
            <person name="Tiedje J."/>
            <person name="Richardson P."/>
        </authorList>
    </citation>
    <scope>NUCLEOTIDE SEQUENCE [LARGE SCALE GENOMIC DNA]</scope>
    <source>
        <strain>OS185</strain>
    </source>
</reference>
<sequence>MWLGVITLFPEMFRAVTDFGVTGRAVKNGLLELHTWNPRDFTHDRHNTVDDRPYGGGPGMLMMVQPLRDAIHAAKAAAGEGAKVIYLSPQGRKLDQQGVTELAQSSRLILVCGRYEGIDERIIQTEVDEEWSIGDYVLSGGELPAMTLIDSVSRLVPGVLGKQASAEQDSFSDGLLDCPHYTRPESLDGVDVPAVLLSGNHEQIRLWRLQQSLGRTLLRRPELLQNLALTDEQTTLLAQFVEAMNKHA</sequence>
<proteinExistence type="inferred from homology"/>